<name>DEF_STRP6</name>
<feature type="chain" id="PRO_0000082861" description="Peptide deformylase">
    <location>
        <begin position="1"/>
        <end position="204"/>
    </location>
</feature>
<feature type="active site" evidence="1">
    <location>
        <position position="175"/>
    </location>
</feature>
<feature type="binding site" evidence="1">
    <location>
        <position position="131"/>
    </location>
    <ligand>
        <name>Fe cation</name>
        <dbReference type="ChEBI" id="CHEBI:24875"/>
    </ligand>
</feature>
<feature type="binding site" evidence="1">
    <location>
        <position position="174"/>
    </location>
    <ligand>
        <name>Fe cation</name>
        <dbReference type="ChEBI" id="CHEBI:24875"/>
    </ligand>
</feature>
<feature type="binding site" evidence="1">
    <location>
        <position position="178"/>
    </location>
    <ligand>
        <name>Fe cation</name>
        <dbReference type="ChEBI" id="CHEBI:24875"/>
    </ligand>
</feature>
<keyword id="KW-0903">Direct protein sequencing</keyword>
<keyword id="KW-0378">Hydrolase</keyword>
<keyword id="KW-0408">Iron</keyword>
<keyword id="KW-0479">Metal-binding</keyword>
<keyword id="KW-0648">Protein biosynthesis</keyword>
<reference key="1">
    <citation type="journal article" date="2004" name="J. Infect. Dis.">
        <title>Progress toward characterization of the group A Streptococcus metagenome: complete genome sequence of a macrolide-resistant serotype M6 strain.</title>
        <authorList>
            <person name="Banks D.J."/>
            <person name="Porcella S.F."/>
            <person name="Barbian K.D."/>
            <person name="Beres S.B."/>
            <person name="Philips L.E."/>
            <person name="Voyich J.M."/>
            <person name="DeLeo F.R."/>
            <person name="Martin J.M."/>
            <person name="Somerville G.A."/>
            <person name="Musser J.M."/>
        </authorList>
    </citation>
    <scope>NUCLEOTIDE SEQUENCE [LARGE SCALE GENOMIC DNA]</scope>
    <source>
        <strain>ATCC BAA-946 / MGAS10394</strain>
    </source>
</reference>
<reference key="2">
    <citation type="submission" date="2000-05" db="UniProtKB">
        <title>Two-dimensional gel electrophoresis map of Streptococcus pyogenes proteins.</title>
        <authorList>
            <person name="Hogan D.A."/>
            <person name="Du P."/>
            <person name="Stevenson T.I."/>
            <person name="Whitton M."/>
            <person name="Kilby G.W."/>
            <person name="Rogers J."/>
            <person name="VanBogelen R.A."/>
        </authorList>
    </citation>
    <scope>PROTEIN SEQUENCE OF 7-20; 68-101; 148-161; 166-187 AND 192-204</scope>
    <scope>MASS SPECTROMETRY</scope>
    <source>
        <strain>JRS4 / Serotype M6</strain>
    </source>
</reference>
<dbReference type="EC" id="3.5.1.88" evidence="1"/>
<dbReference type="EMBL" id="CP000003">
    <property type="protein sequence ID" value="AAT87812.1"/>
    <property type="molecule type" value="Genomic_DNA"/>
</dbReference>
<dbReference type="RefSeq" id="WP_002982624.1">
    <property type="nucleotide sequence ID" value="NC_006086.1"/>
</dbReference>
<dbReference type="SMR" id="Q5X9V1"/>
<dbReference type="GeneID" id="69901455"/>
<dbReference type="KEGG" id="spa:M6_Spy1677"/>
<dbReference type="HOGENOM" id="CLU_061901_4_0_9"/>
<dbReference type="Proteomes" id="UP000001167">
    <property type="component" value="Chromosome"/>
</dbReference>
<dbReference type="GO" id="GO:0046872">
    <property type="term" value="F:metal ion binding"/>
    <property type="evidence" value="ECO:0007669"/>
    <property type="project" value="UniProtKB-KW"/>
</dbReference>
<dbReference type="GO" id="GO:0042586">
    <property type="term" value="F:peptide deformylase activity"/>
    <property type="evidence" value="ECO:0007669"/>
    <property type="project" value="UniProtKB-UniRule"/>
</dbReference>
<dbReference type="GO" id="GO:0043686">
    <property type="term" value="P:co-translational protein modification"/>
    <property type="evidence" value="ECO:0007669"/>
    <property type="project" value="TreeGrafter"/>
</dbReference>
<dbReference type="GO" id="GO:0006412">
    <property type="term" value="P:translation"/>
    <property type="evidence" value="ECO:0007669"/>
    <property type="project" value="UniProtKB-UniRule"/>
</dbReference>
<dbReference type="CDD" id="cd00487">
    <property type="entry name" value="Pep_deformylase"/>
    <property type="match status" value="1"/>
</dbReference>
<dbReference type="FunFam" id="3.90.45.10:FF:000002">
    <property type="entry name" value="Peptide deformylase"/>
    <property type="match status" value="1"/>
</dbReference>
<dbReference type="Gene3D" id="3.90.45.10">
    <property type="entry name" value="Peptide deformylase"/>
    <property type="match status" value="1"/>
</dbReference>
<dbReference type="HAMAP" id="MF_00163">
    <property type="entry name" value="Pep_deformylase"/>
    <property type="match status" value="1"/>
</dbReference>
<dbReference type="InterPro" id="IPR023635">
    <property type="entry name" value="Peptide_deformylase"/>
</dbReference>
<dbReference type="InterPro" id="IPR036821">
    <property type="entry name" value="Peptide_deformylase_sf"/>
</dbReference>
<dbReference type="NCBIfam" id="TIGR00079">
    <property type="entry name" value="pept_deformyl"/>
    <property type="match status" value="1"/>
</dbReference>
<dbReference type="PANTHER" id="PTHR10458">
    <property type="entry name" value="PEPTIDE DEFORMYLASE"/>
    <property type="match status" value="1"/>
</dbReference>
<dbReference type="PANTHER" id="PTHR10458:SF8">
    <property type="entry name" value="PEPTIDE DEFORMYLASE 2"/>
    <property type="match status" value="1"/>
</dbReference>
<dbReference type="Pfam" id="PF01327">
    <property type="entry name" value="Pep_deformylase"/>
    <property type="match status" value="1"/>
</dbReference>
<dbReference type="PIRSF" id="PIRSF004749">
    <property type="entry name" value="Pep_def"/>
    <property type="match status" value="1"/>
</dbReference>
<dbReference type="PRINTS" id="PR01576">
    <property type="entry name" value="PDEFORMYLASE"/>
</dbReference>
<dbReference type="SUPFAM" id="SSF56420">
    <property type="entry name" value="Peptide deformylase"/>
    <property type="match status" value="1"/>
</dbReference>
<gene>
    <name evidence="1" type="primary">def</name>
    <name type="ordered locus">M6_Spy1677</name>
</gene>
<protein>
    <recommendedName>
        <fullName evidence="1">Peptide deformylase</fullName>
        <shortName evidence="1">PDF</shortName>
        <ecNumber evidence="1">3.5.1.88</ecNumber>
    </recommendedName>
    <alternativeName>
        <fullName evidence="1">Polypeptide deformylase</fullName>
    </alternativeName>
</protein>
<organism>
    <name type="scientific">Streptococcus pyogenes serotype M6 (strain ATCC BAA-946 / MGAS10394)</name>
    <dbReference type="NCBI Taxonomy" id="286636"/>
    <lineage>
        <taxon>Bacteria</taxon>
        <taxon>Bacillati</taxon>
        <taxon>Bacillota</taxon>
        <taxon>Bacilli</taxon>
        <taxon>Lactobacillales</taxon>
        <taxon>Streptococcaceae</taxon>
        <taxon>Streptococcus</taxon>
    </lineage>
</organism>
<accession>Q5X9V1</accession>
<accession>P82590</accession>
<comment type="function">
    <text evidence="1">Removes the formyl group from the N-terminal Met of newly synthesized proteins. Requires at least a dipeptide for an efficient rate of reaction. N-terminal L-methionine is a prerequisite for activity but the enzyme has broad specificity at other positions.</text>
</comment>
<comment type="catalytic activity">
    <reaction evidence="1">
        <text>N-terminal N-formyl-L-methionyl-[peptide] + H2O = N-terminal L-methionyl-[peptide] + formate</text>
        <dbReference type="Rhea" id="RHEA:24420"/>
        <dbReference type="Rhea" id="RHEA-COMP:10639"/>
        <dbReference type="Rhea" id="RHEA-COMP:10640"/>
        <dbReference type="ChEBI" id="CHEBI:15377"/>
        <dbReference type="ChEBI" id="CHEBI:15740"/>
        <dbReference type="ChEBI" id="CHEBI:49298"/>
        <dbReference type="ChEBI" id="CHEBI:64731"/>
        <dbReference type="EC" id="3.5.1.88"/>
    </reaction>
</comment>
<comment type="cofactor">
    <cofactor evidence="1">
        <name>Fe(2+)</name>
        <dbReference type="ChEBI" id="CHEBI:29033"/>
    </cofactor>
    <text evidence="1">Binds 1 Fe(2+) ion.</text>
</comment>
<comment type="mass spectrometry"/>
<comment type="similarity">
    <text evidence="1">Belongs to the polypeptide deformylase family.</text>
</comment>
<sequence>MSAQDKLIKPSHLITMDDIIREGNPTLRAVAKEVSLPLCDEDILLGEKMMQFLKHSQDPVMAEKLGLRAGVGLAAPQIDVSKRIIAVLVPNLPDKEGNPPKEAYSWQEVLYNPKIVSHSVQDAALSDGEGCLSVDRVVEGYVVRHARVTVDYYDKEGQQHRIKLKGYNAIVVQHEIDHINGVLFYDRINAKNPFETKEELLILD</sequence>
<evidence type="ECO:0000255" key="1">
    <source>
        <dbReference type="HAMAP-Rule" id="MF_00163"/>
    </source>
</evidence>
<evidence type="ECO:0000269" key="2">
    <source ref="2"/>
</evidence>
<proteinExistence type="evidence at protein level"/>